<keyword id="KW-0130">Cell adhesion</keyword>
<keyword id="KW-1003">Cell membrane</keyword>
<keyword id="KW-1015">Disulfide bond</keyword>
<keyword id="KW-0325">Glycoprotein</keyword>
<keyword id="KW-0393">Immunoglobulin domain</keyword>
<keyword id="KW-0472">Membrane</keyword>
<keyword id="KW-1185">Reference proteome</keyword>
<keyword id="KW-0677">Repeat</keyword>
<keyword id="KW-0732">Signal</keyword>
<keyword id="KW-0812">Transmembrane</keyword>
<keyword id="KW-1133">Transmembrane helix</keyword>
<proteinExistence type="evidence at transcript level"/>
<comment type="function">
    <text evidence="1">ICAM proteins are ligands for the leukocyte adhesion protein LFA-1 (integrin alpha-L/beta-2). ICAM4 is also a ligand for alpha-4/beta-1 and alpha-V integrins (By similarity).</text>
</comment>
<comment type="subcellular location">
    <subcellularLocation>
        <location evidence="3">Cell membrane</location>
        <topology evidence="4">Single-pass type I membrane protein</topology>
    </subcellularLocation>
</comment>
<comment type="PTM">
    <text evidence="1">N- and O-glycosylated.</text>
</comment>
<comment type="similarity">
    <text evidence="6">Belongs to the immunoglobulin superfamily. ICAM family.</text>
</comment>
<name>ICAM4_PANTR</name>
<accession>Q5NKT8</accession>
<protein>
    <recommendedName>
        <fullName>Intercellular adhesion molecule 4</fullName>
        <shortName>ICAM-4</shortName>
    </recommendedName>
    <cdAntigenName>CD242</cdAntigenName>
</protein>
<gene>
    <name type="primary">ICAM4</name>
</gene>
<reference key="1">
    <citation type="submission" date="2001-01" db="EMBL/GenBank/DDBJ databases">
        <title>The chimpanzee ICAM proteins have been positively selected.</title>
        <authorList>
            <person name="Messier W."/>
            <person name="Walter N.A.R."/>
            <person name="Hink R.L."/>
        </authorList>
    </citation>
    <scope>NUCLEOTIDE SEQUENCE [MRNA]</scope>
    <source>
        <strain>Isolate Bonnie</strain>
        <tissue>Blood</tissue>
    </source>
</reference>
<evidence type="ECO:0000250" key="1"/>
<evidence type="ECO:0000250" key="2">
    <source>
        <dbReference type="UniProtKB" id="P32942"/>
    </source>
</evidence>
<evidence type="ECO:0000250" key="3">
    <source>
        <dbReference type="UniProtKB" id="Q9ERM2"/>
    </source>
</evidence>
<evidence type="ECO:0000255" key="4"/>
<evidence type="ECO:0000255" key="5">
    <source>
        <dbReference type="PROSITE-ProRule" id="PRU00114"/>
    </source>
</evidence>
<evidence type="ECO:0000305" key="6"/>
<organism>
    <name type="scientific">Pan troglodytes</name>
    <name type="common">Chimpanzee</name>
    <dbReference type="NCBI Taxonomy" id="9598"/>
    <lineage>
        <taxon>Eukaryota</taxon>
        <taxon>Metazoa</taxon>
        <taxon>Chordata</taxon>
        <taxon>Craniata</taxon>
        <taxon>Vertebrata</taxon>
        <taxon>Euteleostomi</taxon>
        <taxon>Mammalia</taxon>
        <taxon>Eutheria</taxon>
        <taxon>Euarchontoglires</taxon>
        <taxon>Primates</taxon>
        <taxon>Haplorrhini</taxon>
        <taxon>Catarrhini</taxon>
        <taxon>Hominidae</taxon>
        <taxon>Pan</taxon>
    </lineage>
</organism>
<feature type="signal peptide" evidence="4">
    <location>
        <begin position="1" status="less than"/>
        <end position="20"/>
    </location>
</feature>
<feature type="chain" id="PRO_0000014798" description="Intercellular adhesion molecule 4">
    <location>
        <begin position="21"/>
        <end position="269"/>
    </location>
</feature>
<feature type="topological domain" description="Extracellular" evidence="4">
    <location>
        <begin position="21"/>
        <end position="238"/>
    </location>
</feature>
<feature type="transmembrane region" description="Helical" evidence="4">
    <location>
        <begin position="239"/>
        <end position="259"/>
    </location>
</feature>
<feature type="topological domain" description="Cytoplasmic" evidence="4">
    <location>
        <begin position="260"/>
        <end position="269"/>
    </location>
</feature>
<feature type="domain" description="Ig-like C2-type 1">
    <location>
        <begin position="60"/>
        <end position="122"/>
    </location>
</feature>
<feature type="domain" description="Ig-like C2-type 2">
    <location>
        <begin position="144"/>
        <end position="215"/>
    </location>
</feature>
<feature type="glycosylation site" description="N-linked (GlcNAc...) asparagine" evidence="4">
    <location>
        <position position="66"/>
    </location>
</feature>
<feature type="glycosylation site" description="N-linked (GlcNAc...) asparagine" evidence="4">
    <location>
        <position position="76"/>
    </location>
</feature>
<feature type="glycosylation site" description="N-linked (GlcNAc...) asparagine" evidence="4">
    <location>
        <position position="188"/>
    </location>
</feature>
<feature type="glycosylation site" description="N-linked (GlcNAc...) asparagine" evidence="4">
    <location>
        <position position="221"/>
    </location>
</feature>
<feature type="disulfide bond" evidence="1">
    <location>
        <begin position="67"/>
        <end position="115"/>
    </location>
</feature>
<feature type="disulfide bond" evidence="2 5">
    <location>
        <begin position="67"/>
        <end position="111"/>
    </location>
</feature>
<feature type="disulfide bond" evidence="2">
    <location>
        <begin position="71"/>
        <end position="115"/>
    </location>
</feature>
<feature type="disulfide bond" evidence="1">
    <location>
        <begin position="151"/>
        <end position="208"/>
    </location>
</feature>
<feature type="non-terminal residue">
    <location>
        <position position="1"/>
    </location>
</feature>
<sequence>SLFPLSLLFFLAAAYPGVGSALGRRTKRAQSPKGSPLAPSGTSVPFWVRMSPEFVAVQPGKSVQLNCSNSCPQPQNSSLRTPLRQGKTLRGPGWVSYQLLDVRAWSSLAHCLVTCAGKTRWATSRITAYKPPHSVILEPPVLKGRKYTLRCHVTQVFPVGYLVVTLRHGSRVIYSESLERFTGLDLANVTLTYEFAAGPRDFWQPVICHARLNLDGLVVRNSSAPITLMLAWSSAPTALASVSIAALVGILLTVGAAYLCKCLAMKSQA</sequence>
<dbReference type="EMBL" id="AF340064">
    <property type="protein sequence ID" value="AAQ14921.1"/>
    <property type="molecule type" value="mRNA"/>
</dbReference>
<dbReference type="RefSeq" id="NP_001181868.1">
    <property type="nucleotide sequence ID" value="NM_001194939.1"/>
</dbReference>
<dbReference type="SMR" id="Q5NKT8"/>
<dbReference type="FunCoup" id="Q5NKT8">
    <property type="interactions" value="608"/>
</dbReference>
<dbReference type="STRING" id="9598.ENSPTRP00000080743"/>
<dbReference type="GlyCosmos" id="Q5NKT8">
    <property type="glycosylation" value="4 sites, No reported glycans"/>
</dbReference>
<dbReference type="PaxDb" id="9598-ENSPTRP00000054779"/>
<dbReference type="GeneID" id="455698"/>
<dbReference type="KEGG" id="ptr:455698"/>
<dbReference type="CTD" id="3386"/>
<dbReference type="eggNOG" id="ENOG502TF7V">
    <property type="taxonomic scope" value="Eukaryota"/>
</dbReference>
<dbReference type="InParanoid" id="Q5NKT8"/>
<dbReference type="OrthoDB" id="17664at9604"/>
<dbReference type="Proteomes" id="UP000002277">
    <property type="component" value="Unplaced"/>
</dbReference>
<dbReference type="GO" id="GO:0005886">
    <property type="term" value="C:plasma membrane"/>
    <property type="evidence" value="ECO:0000318"/>
    <property type="project" value="GO_Central"/>
</dbReference>
<dbReference type="GO" id="GO:0005178">
    <property type="term" value="F:integrin binding"/>
    <property type="evidence" value="ECO:0000318"/>
    <property type="project" value="GO_Central"/>
</dbReference>
<dbReference type="GO" id="GO:0007155">
    <property type="term" value="P:cell adhesion"/>
    <property type="evidence" value="ECO:0000318"/>
    <property type="project" value="GO_Central"/>
</dbReference>
<dbReference type="GO" id="GO:0098609">
    <property type="term" value="P:cell-cell adhesion"/>
    <property type="evidence" value="ECO:0007669"/>
    <property type="project" value="InterPro"/>
</dbReference>
<dbReference type="FunFam" id="2.60.40.10:FF:000194">
    <property type="entry name" value="Intercellular adhesion molecule 1"/>
    <property type="match status" value="1"/>
</dbReference>
<dbReference type="FunFam" id="2.60.40.10:FF:001426">
    <property type="entry name" value="Intercellular adhesion molecule 4"/>
    <property type="match status" value="1"/>
</dbReference>
<dbReference type="Gene3D" id="2.60.40.10">
    <property type="entry name" value="Immunoglobulins"/>
    <property type="match status" value="2"/>
</dbReference>
<dbReference type="InterPro" id="IPR013768">
    <property type="entry name" value="ICAM_N"/>
</dbReference>
<dbReference type="InterPro" id="IPR047012">
    <property type="entry name" value="ICAM_VCAM"/>
</dbReference>
<dbReference type="InterPro" id="IPR003987">
    <property type="entry name" value="ICAM_VCAM_N"/>
</dbReference>
<dbReference type="InterPro" id="IPR036179">
    <property type="entry name" value="Ig-like_dom_sf"/>
</dbReference>
<dbReference type="InterPro" id="IPR013783">
    <property type="entry name" value="Ig-like_fold"/>
</dbReference>
<dbReference type="PANTHER" id="PTHR13771">
    <property type="entry name" value="INTERCELLULAR ADHESION MOLECULE"/>
    <property type="match status" value="1"/>
</dbReference>
<dbReference type="PANTHER" id="PTHR13771:SF8">
    <property type="entry name" value="INTERCELLULAR ADHESION MOLECULE 4"/>
    <property type="match status" value="1"/>
</dbReference>
<dbReference type="Pfam" id="PF03921">
    <property type="entry name" value="ICAM_N"/>
    <property type="match status" value="1"/>
</dbReference>
<dbReference type="PRINTS" id="PR01472">
    <property type="entry name" value="ICAMVCAM1"/>
</dbReference>
<dbReference type="SUPFAM" id="SSF48726">
    <property type="entry name" value="Immunoglobulin"/>
    <property type="match status" value="2"/>
</dbReference>